<reference key="1">
    <citation type="submission" date="2005-09" db="EMBL/GenBank/DDBJ databases">
        <authorList>
            <person name="Glass J.I."/>
            <person name="Lartigue C."/>
            <person name="Pfannkoch C."/>
            <person name="Baden-Tillson H."/>
            <person name="Smith H.O."/>
            <person name="Venter J.C."/>
            <person name="Roske K."/>
            <person name="Wise K.S."/>
            <person name="Calcutt M.J."/>
            <person name="Nelson W.C."/>
            <person name="Nierman W.C."/>
        </authorList>
    </citation>
    <scope>NUCLEOTIDE SEQUENCE [LARGE SCALE GENOMIC DNA]</scope>
    <source>
        <strain>California kid / ATCC 27343 / NCTC 10154</strain>
    </source>
</reference>
<comment type="function">
    <text evidence="1">Involved in protein export. Acts as a chaperone by maintaining the newly synthesized protein in an open conformation. Functions as a peptidyl-prolyl cis-trans isomerase.</text>
</comment>
<comment type="catalytic activity">
    <reaction evidence="1">
        <text>[protein]-peptidylproline (omega=180) = [protein]-peptidylproline (omega=0)</text>
        <dbReference type="Rhea" id="RHEA:16237"/>
        <dbReference type="Rhea" id="RHEA-COMP:10747"/>
        <dbReference type="Rhea" id="RHEA-COMP:10748"/>
        <dbReference type="ChEBI" id="CHEBI:83833"/>
        <dbReference type="ChEBI" id="CHEBI:83834"/>
        <dbReference type="EC" id="5.2.1.8"/>
    </reaction>
</comment>
<comment type="subcellular location">
    <subcellularLocation>
        <location>Cytoplasm</location>
    </subcellularLocation>
    <text evidence="1">About half TF is bound to the ribosome near the polypeptide exit tunnel while the other half is free in the cytoplasm.</text>
</comment>
<comment type="domain">
    <text evidence="1">Consists of 3 domains; the N-terminus binds the ribosome, the middle domain has PPIase activity, while the C-terminus has intrinsic chaperone activity on its own.</text>
</comment>
<comment type="similarity">
    <text evidence="1">Belongs to the FKBP-type PPIase family. Tig subfamily.</text>
</comment>
<dbReference type="EC" id="5.2.1.8" evidence="1"/>
<dbReference type="EMBL" id="CP000123">
    <property type="protein sequence ID" value="ABC01541.1"/>
    <property type="molecule type" value="Genomic_DNA"/>
</dbReference>
<dbReference type="RefSeq" id="WP_011387387.1">
    <property type="nucleotide sequence ID" value="NC_007633.1"/>
</dbReference>
<dbReference type="SMR" id="Q2SRX4"/>
<dbReference type="GeneID" id="23778527"/>
<dbReference type="KEGG" id="mcp:MCAP_0517"/>
<dbReference type="HOGENOM" id="CLU_033058_3_2_14"/>
<dbReference type="PhylomeDB" id="Q2SRX4"/>
<dbReference type="Proteomes" id="UP000001928">
    <property type="component" value="Chromosome"/>
</dbReference>
<dbReference type="GO" id="GO:0005737">
    <property type="term" value="C:cytoplasm"/>
    <property type="evidence" value="ECO:0007669"/>
    <property type="project" value="UniProtKB-SubCell"/>
</dbReference>
<dbReference type="GO" id="GO:0003755">
    <property type="term" value="F:peptidyl-prolyl cis-trans isomerase activity"/>
    <property type="evidence" value="ECO:0007669"/>
    <property type="project" value="UniProtKB-UniRule"/>
</dbReference>
<dbReference type="GO" id="GO:0051301">
    <property type="term" value="P:cell division"/>
    <property type="evidence" value="ECO:0007669"/>
    <property type="project" value="UniProtKB-KW"/>
</dbReference>
<dbReference type="GO" id="GO:0006457">
    <property type="term" value="P:protein folding"/>
    <property type="evidence" value="ECO:0007669"/>
    <property type="project" value="UniProtKB-UniRule"/>
</dbReference>
<dbReference type="GO" id="GO:0015031">
    <property type="term" value="P:protein transport"/>
    <property type="evidence" value="ECO:0007669"/>
    <property type="project" value="UniProtKB-UniRule"/>
</dbReference>
<dbReference type="FunFam" id="3.10.50.40:FF:000001">
    <property type="entry name" value="Trigger factor"/>
    <property type="match status" value="1"/>
</dbReference>
<dbReference type="Gene3D" id="3.10.50.40">
    <property type="match status" value="1"/>
</dbReference>
<dbReference type="Gene3D" id="3.30.70.1050">
    <property type="entry name" value="Trigger factor ribosome-binding domain"/>
    <property type="match status" value="1"/>
</dbReference>
<dbReference type="Gene3D" id="1.10.3120.10">
    <property type="entry name" value="Trigger factor, C-terminal domain"/>
    <property type="match status" value="1"/>
</dbReference>
<dbReference type="HAMAP" id="MF_00303">
    <property type="entry name" value="Trigger_factor_Tig"/>
    <property type="match status" value="1"/>
</dbReference>
<dbReference type="InterPro" id="IPR046357">
    <property type="entry name" value="PPIase_dom_sf"/>
</dbReference>
<dbReference type="InterPro" id="IPR001179">
    <property type="entry name" value="PPIase_FKBP_dom"/>
</dbReference>
<dbReference type="InterPro" id="IPR005215">
    <property type="entry name" value="Trig_fac"/>
</dbReference>
<dbReference type="InterPro" id="IPR008880">
    <property type="entry name" value="Trigger_fac_C"/>
</dbReference>
<dbReference type="InterPro" id="IPR037041">
    <property type="entry name" value="Trigger_fac_C_sf"/>
</dbReference>
<dbReference type="InterPro" id="IPR008881">
    <property type="entry name" value="Trigger_fac_ribosome-bd_bac"/>
</dbReference>
<dbReference type="InterPro" id="IPR036611">
    <property type="entry name" value="Trigger_fac_ribosome-bd_sf"/>
</dbReference>
<dbReference type="InterPro" id="IPR027304">
    <property type="entry name" value="Trigger_fact/SurA_dom_sf"/>
</dbReference>
<dbReference type="NCBIfam" id="TIGR00115">
    <property type="entry name" value="tig"/>
    <property type="match status" value="1"/>
</dbReference>
<dbReference type="Pfam" id="PF00254">
    <property type="entry name" value="FKBP_C"/>
    <property type="match status" value="1"/>
</dbReference>
<dbReference type="Pfam" id="PF05698">
    <property type="entry name" value="Trigger_C"/>
    <property type="match status" value="1"/>
</dbReference>
<dbReference type="Pfam" id="PF05697">
    <property type="entry name" value="Trigger_N"/>
    <property type="match status" value="1"/>
</dbReference>
<dbReference type="PIRSF" id="PIRSF003095">
    <property type="entry name" value="Trigger_factor"/>
    <property type="match status" value="1"/>
</dbReference>
<dbReference type="SUPFAM" id="SSF54534">
    <property type="entry name" value="FKBP-like"/>
    <property type="match status" value="1"/>
</dbReference>
<dbReference type="SUPFAM" id="SSF109998">
    <property type="entry name" value="Triger factor/SurA peptide-binding domain-like"/>
    <property type="match status" value="1"/>
</dbReference>
<dbReference type="SUPFAM" id="SSF102735">
    <property type="entry name" value="Trigger factor ribosome-binding domain"/>
    <property type="match status" value="1"/>
</dbReference>
<dbReference type="PROSITE" id="PS50059">
    <property type="entry name" value="FKBP_PPIASE"/>
    <property type="match status" value="1"/>
</dbReference>
<accession>Q2SRX4</accession>
<sequence>MIFAQEKLVDQGQGKWTVTIDGEQWIEFLKKAKNRLKANLVVPGFRKGKAPESETAKYLTPIKLYNEAFKIVIKPAFDFALTQENRIQNDNSPTPVIVKVSEKEIVIDFVFDLVLEVKIGEYKNISTIKKSTVEVSQEDVDNVIDMYRSRFAMQKEKEVSDQIQKGDIVTFDFKGYVDDQAFEGGEAKDFVLEIGSNQFVPGFEDSMIGLKVGENQEINVKFPEEYIPSLAGKDAKFVLNIKNIKEKILPAKDDELVKDLNLPDITTYVQLEEKVKKDVLEQKTKNNKSEFVENIIDEIIKTSEFQIPKTIVERQLKDVKKEFEDQLTQQKITLEKYKEITKISQEEIDEELKNDAIHRIKSFLVVSEIKNKENIKASEEAINTKFEEFANLYGIEVEKIKSLIDNQAIKHQVESELLETFIFENNGN</sequence>
<proteinExistence type="inferred from homology"/>
<gene>
    <name evidence="1" type="primary">tig</name>
    <name type="ordered locus">MCAP_0517</name>
</gene>
<organism>
    <name type="scientific">Mycoplasma capricolum subsp. capricolum (strain California kid / ATCC 27343 / NCTC 10154)</name>
    <dbReference type="NCBI Taxonomy" id="340047"/>
    <lineage>
        <taxon>Bacteria</taxon>
        <taxon>Bacillati</taxon>
        <taxon>Mycoplasmatota</taxon>
        <taxon>Mollicutes</taxon>
        <taxon>Mycoplasmataceae</taxon>
        <taxon>Mycoplasma</taxon>
    </lineage>
</organism>
<feature type="chain" id="PRO_0000256575" description="Trigger factor">
    <location>
        <begin position="1"/>
        <end position="428"/>
    </location>
</feature>
<feature type="domain" description="PPIase FKBP-type" evidence="1">
    <location>
        <begin position="166"/>
        <end position="250"/>
    </location>
</feature>
<evidence type="ECO:0000255" key="1">
    <source>
        <dbReference type="HAMAP-Rule" id="MF_00303"/>
    </source>
</evidence>
<name>TIG_MYCCT</name>
<protein>
    <recommendedName>
        <fullName evidence="1">Trigger factor</fullName>
        <shortName evidence="1">TF</shortName>
        <ecNumber evidence="1">5.2.1.8</ecNumber>
    </recommendedName>
    <alternativeName>
        <fullName evidence="1">PPIase</fullName>
    </alternativeName>
</protein>
<keyword id="KW-0131">Cell cycle</keyword>
<keyword id="KW-0132">Cell division</keyword>
<keyword id="KW-0143">Chaperone</keyword>
<keyword id="KW-0963">Cytoplasm</keyword>
<keyword id="KW-0413">Isomerase</keyword>
<keyword id="KW-0697">Rotamase</keyword>